<reference key="1">
    <citation type="journal article" date="2008" name="Genome Res.">
        <title>Comparative genome analysis of Salmonella enteritidis PT4 and Salmonella gallinarum 287/91 provides insights into evolutionary and host adaptation pathways.</title>
        <authorList>
            <person name="Thomson N.R."/>
            <person name="Clayton D.J."/>
            <person name="Windhorst D."/>
            <person name="Vernikos G."/>
            <person name="Davidson S."/>
            <person name="Churcher C."/>
            <person name="Quail M.A."/>
            <person name="Stevens M."/>
            <person name="Jones M.A."/>
            <person name="Watson M."/>
            <person name="Barron A."/>
            <person name="Layton A."/>
            <person name="Pickard D."/>
            <person name="Kingsley R.A."/>
            <person name="Bignell A."/>
            <person name="Clark L."/>
            <person name="Harris B."/>
            <person name="Ormond D."/>
            <person name="Abdellah Z."/>
            <person name="Brooks K."/>
            <person name="Cherevach I."/>
            <person name="Chillingworth T."/>
            <person name="Woodward J."/>
            <person name="Norberczak H."/>
            <person name="Lord A."/>
            <person name="Arrowsmith C."/>
            <person name="Jagels K."/>
            <person name="Moule S."/>
            <person name="Mungall K."/>
            <person name="Saunders M."/>
            <person name="Whitehead S."/>
            <person name="Chabalgoity J.A."/>
            <person name="Maskell D."/>
            <person name="Humphreys T."/>
            <person name="Roberts M."/>
            <person name="Barrow P.A."/>
            <person name="Dougan G."/>
            <person name="Parkhill J."/>
        </authorList>
    </citation>
    <scope>NUCLEOTIDE SEQUENCE [LARGE SCALE GENOMIC DNA]</scope>
    <source>
        <strain>287/91 / NCTC 13346</strain>
    </source>
</reference>
<comment type="function">
    <text evidence="1">H(+)-stimulated, divalent metal cation uptake system.</text>
</comment>
<comment type="subcellular location">
    <subcellularLocation>
        <location evidence="1">Cell inner membrane</location>
        <topology evidence="1">Multi-pass membrane protein</topology>
    </subcellularLocation>
</comment>
<comment type="similarity">
    <text evidence="1">Belongs to the NRAMP family.</text>
</comment>
<name>MNTH_SALG2</name>
<feature type="chain" id="PRO_1000100089" description="Divalent metal cation transporter MntH">
    <location>
        <begin position="1"/>
        <end position="413"/>
    </location>
</feature>
<feature type="topological domain" description="Cytoplasmic" evidence="1">
    <location>
        <begin position="1"/>
        <end position="19"/>
    </location>
</feature>
<feature type="transmembrane region" description="Helical" evidence="1">
    <location>
        <begin position="20"/>
        <end position="39"/>
    </location>
</feature>
<feature type="topological domain" description="Periplasmic" evidence="1">
    <location>
        <begin position="40"/>
        <end position="51"/>
    </location>
</feature>
<feature type="transmembrane region" description="Helical" evidence="1">
    <location>
        <begin position="52"/>
        <end position="71"/>
    </location>
</feature>
<feature type="topological domain" description="Cytoplasmic" evidence="1">
    <location>
        <begin position="72"/>
        <end position="95"/>
    </location>
</feature>
<feature type="transmembrane region" description="Helical" evidence="1">
    <location>
        <begin position="96"/>
        <end position="118"/>
    </location>
</feature>
<feature type="topological domain" description="Periplasmic" evidence="1">
    <location>
        <begin position="119"/>
        <end position="125"/>
    </location>
</feature>
<feature type="transmembrane region" description="Helical" evidence="1">
    <location>
        <begin position="126"/>
        <end position="145"/>
    </location>
</feature>
<feature type="topological domain" description="Cytoplasmic" evidence="1">
    <location>
        <begin position="146"/>
        <end position="155"/>
    </location>
</feature>
<feature type="transmembrane region" description="Helical" evidence="1">
    <location>
        <begin position="156"/>
        <end position="175"/>
    </location>
</feature>
<feature type="topological domain" description="Periplasmic" evidence="1">
    <location>
        <begin position="176"/>
        <end position="196"/>
    </location>
</feature>
<feature type="transmembrane region" description="Helical" evidence="1">
    <location>
        <begin position="197"/>
        <end position="220"/>
    </location>
</feature>
<feature type="topological domain" description="Cytoplasmic" evidence="1">
    <location>
        <begin position="221"/>
        <end position="238"/>
    </location>
</feature>
<feature type="transmembrane region" description="Helical" evidence="1">
    <location>
        <begin position="239"/>
        <end position="258"/>
    </location>
</feature>
<feature type="topological domain" description="Periplasmic" evidence="1">
    <location>
        <begin position="259"/>
        <end position="276"/>
    </location>
</feature>
<feature type="transmembrane region" description="Helical" evidence="1">
    <location>
        <begin position="277"/>
        <end position="297"/>
    </location>
</feature>
<feature type="topological domain" description="Cytoplasmic" evidence="1">
    <location>
        <begin position="298"/>
        <end position="327"/>
    </location>
</feature>
<feature type="transmembrane region" description="Helical" evidence="1">
    <location>
        <begin position="328"/>
        <end position="344"/>
    </location>
</feature>
<feature type="topological domain" description="Periplasmic" evidence="1">
    <location>
        <begin position="345"/>
        <end position="350"/>
    </location>
</feature>
<feature type="transmembrane region" description="Helical" evidence="1">
    <location>
        <begin position="351"/>
        <end position="370"/>
    </location>
</feature>
<feature type="topological domain" description="Cytoplasmic" evidence="1">
    <location>
        <begin position="371"/>
        <end position="387"/>
    </location>
</feature>
<feature type="transmembrane region" description="Helical" evidence="1">
    <location>
        <begin position="388"/>
        <end position="406"/>
    </location>
</feature>
<feature type="topological domain" description="Periplasmic" evidence="1">
    <location>
        <begin position="407"/>
        <end position="413"/>
    </location>
</feature>
<accession>B5RCN6</accession>
<protein>
    <recommendedName>
        <fullName evidence="1">Divalent metal cation transporter MntH</fullName>
    </recommendedName>
</protein>
<sequence>MTDNRVENSSGRAARKLRLALMGPAFIAAIGYIDPGNFATNIQAGASFGYQLLWVVVWANLMAMLIQILSAKLGIATGKNLAEQIRDHYPRPVVWFYWVQAEIIAMATDLAEFIGAAIGFKLILGVSLLQGAVLTGIATFLILMLQRRGQKPLEKVIGGLLLFVAAAYIVELFFSQPDMAQLGKGMVIPALPNPEAVFLAAGVLGATIMPHVIYLHSSLTQHLHGGTRQQRYSATKWDVAIAMTIAGFVNLAMMATAAAAFHFSGHTGIADLDQAYLTLEPLLSHAAATVFGLSLVAAGLSSTVVGTLAGQVVMQGFVRFHIPLWVRRSITMLPSFIVILMGLDPTRILVMSQVLLSFGIALALVPLLIFTSNATLMGELVNTRRVKQIGWIIVVLVVALNIWLLVGTVMGLS</sequence>
<keyword id="KW-0997">Cell inner membrane</keyword>
<keyword id="KW-1003">Cell membrane</keyword>
<keyword id="KW-0406">Ion transport</keyword>
<keyword id="KW-0472">Membrane</keyword>
<keyword id="KW-0769">Symport</keyword>
<keyword id="KW-0812">Transmembrane</keyword>
<keyword id="KW-1133">Transmembrane helix</keyword>
<keyword id="KW-0813">Transport</keyword>
<dbReference type="EMBL" id="AM933173">
    <property type="protein sequence ID" value="CAR38272.1"/>
    <property type="molecule type" value="Genomic_DNA"/>
</dbReference>
<dbReference type="RefSeq" id="WP_000131732.1">
    <property type="nucleotide sequence ID" value="NC_011274.1"/>
</dbReference>
<dbReference type="SMR" id="B5RCN6"/>
<dbReference type="KEGG" id="seg:SG2444"/>
<dbReference type="HOGENOM" id="CLU_020088_2_0_6"/>
<dbReference type="Proteomes" id="UP000008321">
    <property type="component" value="Chromosome"/>
</dbReference>
<dbReference type="GO" id="GO:0005886">
    <property type="term" value="C:plasma membrane"/>
    <property type="evidence" value="ECO:0007669"/>
    <property type="project" value="UniProtKB-SubCell"/>
</dbReference>
<dbReference type="GO" id="GO:0015086">
    <property type="term" value="F:cadmium ion transmembrane transporter activity"/>
    <property type="evidence" value="ECO:0007669"/>
    <property type="project" value="TreeGrafter"/>
</dbReference>
<dbReference type="GO" id="GO:0005384">
    <property type="term" value="F:manganese ion transmembrane transporter activity"/>
    <property type="evidence" value="ECO:0007669"/>
    <property type="project" value="TreeGrafter"/>
</dbReference>
<dbReference type="GO" id="GO:0046872">
    <property type="term" value="F:metal ion binding"/>
    <property type="evidence" value="ECO:0007669"/>
    <property type="project" value="UniProtKB-UniRule"/>
</dbReference>
<dbReference type="GO" id="GO:0015293">
    <property type="term" value="F:symporter activity"/>
    <property type="evidence" value="ECO:0007669"/>
    <property type="project" value="UniProtKB-UniRule"/>
</dbReference>
<dbReference type="GO" id="GO:0034755">
    <property type="term" value="P:iron ion transmembrane transport"/>
    <property type="evidence" value="ECO:0007669"/>
    <property type="project" value="TreeGrafter"/>
</dbReference>
<dbReference type="HAMAP" id="MF_00221">
    <property type="entry name" value="NRAMP"/>
    <property type="match status" value="1"/>
</dbReference>
<dbReference type="InterPro" id="IPR001046">
    <property type="entry name" value="NRAMP_fam"/>
</dbReference>
<dbReference type="NCBIfam" id="TIGR01197">
    <property type="entry name" value="nramp"/>
    <property type="match status" value="1"/>
</dbReference>
<dbReference type="NCBIfam" id="NF037982">
    <property type="entry name" value="Nramp_1"/>
    <property type="match status" value="1"/>
</dbReference>
<dbReference type="NCBIfam" id="NF001923">
    <property type="entry name" value="PRK00701.1"/>
    <property type="match status" value="1"/>
</dbReference>
<dbReference type="PANTHER" id="PTHR11706:SF33">
    <property type="entry name" value="NATURAL RESISTANCE-ASSOCIATED MACROPHAGE PROTEIN 2"/>
    <property type="match status" value="1"/>
</dbReference>
<dbReference type="PANTHER" id="PTHR11706">
    <property type="entry name" value="SOLUTE CARRIER PROTEIN FAMILY 11 MEMBER"/>
    <property type="match status" value="1"/>
</dbReference>
<dbReference type="Pfam" id="PF01566">
    <property type="entry name" value="Nramp"/>
    <property type="match status" value="1"/>
</dbReference>
<dbReference type="PRINTS" id="PR00447">
    <property type="entry name" value="NATRESASSCMP"/>
</dbReference>
<organism>
    <name type="scientific">Salmonella gallinarum (strain 287/91 / NCTC 13346)</name>
    <dbReference type="NCBI Taxonomy" id="550538"/>
    <lineage>
        <taxon>Bacteria</taxon>
        <taxon>Pseudomonadati</taxon>
        <taxon>Pseudomonadota</taxon>
        <taxon>Gammaproteobacteria</taxon>
        <taxon>Enterobacterales</taxon>
        <taxon>Enterobacteriaceae</taxon>
        <taxon>Salmonella</taxon>
    </lineage>
</organism>
<evidence type="ECO:0000255" key="1">
    <source>
        <dbReference type="HAMAP-Rule" id="MF_00221"/>
    </source>
</evidence>
<gene>
    <name evidence="1" type="primary">mntH</name>
    <name type="ordered locus">SG2444</name>
</gene>
<proteinExistence type="inferred from homology"/>